<name>RUB3_ARATH</name>
<feature type="chain" id="PRO_0000035969" description="NEDD8-like protein RUB3">
    <location>
        <begin position="1"/>
        <end position="76"/>
    </location>
</feature>
<feature type="propeptide" id="PRO_0000035970" evidence="4">
    <location>
        <begin position="77"/>
        <end position="78"/>
    </location>
</feature>
<feature type="cross-link" description="Glycyl lysine isopeptide (Gly-Lys) (interchain with K-? in acceptor proteins)" evidence="2">
    <location>
        <position position="76"/>
    </location>
</feature>
<gene>
    <name type="primary">RUB3</name>
    <name type="synonym">UBQ16</name>
    <name type="ordered locus">At1g11980</name>
    <name type="ORF">F12F1.15</name>
</gene>
<evidence type="ECO:0000250" key="1"/>
<evidence type="ECO:0000255" key="2">
    <source>
        <dbReference type="PROSITE-ProRule" id="PRU00214"/>
    </source>
</evidence>
<evidence type="ECO:0000269" key="3">
    <source>
    </source>
</evidence>
<evidence type="ECO:0000305" key="4"/>
<keyword id="KW-1017">Isopeptide bond</keyword>
<keyword id="KW-1185">Reference proteome</keyword>
<keyword id="KW-0833">Ubl conjugation pathway</keyword>
<sequence length="78" mass="8940">MEIKVKTLTEKQIDIEIELTDTIERIKERIEEKEGIPPVHQRIVYTGKQLADDLTAKHYNLERGSVLHLVLALRGGCC</sequence>
<accession>O65381</accession>
<organism>
    <name type="scientific">Arabidopsis thaliana</name>
    <name type="common">Mouse-ear cress</name>
    <dbReference type="NCBI Taxonomy" id="3702"/>
    <lineage>
        <taxon>Eukaryota</taxon>
        <taxon>Viridiplantae</taxon>
        <taxon>Streptophyta</taxon>
        <taxon>Embryophyta</taxon>
        <taxon>Tracheophyta</taxon>
        <taxon>Spermatophyta</taxon>
        <taxon>Magnoliopsida</taxon>
        <taxon>eudicotyledons</taxon>
        <taxon>Gunneridae</taxon>
        <taxon>Pentapetalae</taxon>
        <taxon>rosids</taxon>
        <taxon>malvids</taxon>
        <taxon>Brassicales</taxon>
        <taxon>Brassicaceae</taxon>
        <taxon>Camelineae</taxon>
        <taxon>Arabidopsis</taxon>
    </lineage>
</organism>
<protein>
    <recommendedName>
        <fullName>NEDD8-like protein RUB3</fullName>
    </recommendedName>
    <alternativeName>
        <fullName>Ubiquitin-related protein 3</fullName>
        <shortName>AtRUB3</shortName>
    </alternativeName>
</protein>
<comment type="function">
    <text evidence="1">May function as a stable post-translational protein modifier.</text>
</comment>
<comment type="tissue specificity">
    <text evidence="3">Detected in stems and flower buds, but not in leaves, mature flowers and seedlings.</text>
</comment>
<proteinExistence type="evidence at transcript level"/>
<reference key="1">
    <citation type="journal article" date="2000" name="Nature">
        <title>Sequence and analysis of chromosome 1 of the plant Arabidopsis thaliana.</title>
        <authorList>
            <person name="Theologis A."/>
            <person name="Ecker J.R."/>
            <person name="Palm C.J."/>
            <person name="Federspiel N.A."/>
            <person name="Kaul S."/>
            <person name="White O."/>
            <person name="Alonso J."/>
            <person name="Altafi H."/>
            <person name="Araujo R."/>
            <person name="Bowman C.L."/>
            <person name="Brooks S.Y."/>
            <person name="Buehler E."/>
            <person name="Chan A."/>
            <person name="Chao Q."/>
            <person name="Chen H."/>
            <person name="Cheuk R.F."/>
            <person name="Chin C.W."/>
            <person name="Chung M.K."/>
            <person name="Conn L."/>
            <person name="Conway A.B."/>
            <person name="Conway A.R."/>
            <person name="Creasy T.H."/>
            <person name="Dewar K."/>
            <person name="Dunn P."/>
            <person name="Etgu P."/>
            <person name="Feldblyum T.V."/>
            <person name="Feng J.-D."/>
            <person name="Fong B."/>
            <person name="Fujii C.Y."/>
            <person name="Gill J.E."/>
            <person name="Goldsmith A.D."/>
            <person name="Haas B."/>
            <person name="Hansen N.F."/>
            <person name="Hughes B."/>
            <person name="Huizar L."/>
            <person name="Hunter J.L."/>
            <person name="Jenkins J."/>
            <person name="Johnson-Hopson C."/>
            <person name="Khan S."/>
            <person name="Khaykin E."/>
            <person name="Kim C.J."/>
            <person name="Koo H.L."/>
            <person name="Kremenetskaia I."/>
            <person name="Kurtz D.B."/>
            <person name="Kwan A."/>
            <person name="Lam B."/>
            <person name="Langin-Hooper S."/>
            <person name="Lee A."/>
            <person name="Lee J.M."/>
            <person name="Lenz C.A."/>
            <person name="Li J.H."/>
            <person name="Li Y.-P."/>
            <person name="Lin X."/>
            <person name="Liu S.X."/>
            <person name="Liu Z.A."/>
            <person name="Luros J.S."/>
            <person name="Maiti R."/>
            <person name="Marziali A."/>
            <person name="Militscher J."/>
            <person name="Miranda M."/>
            <person name="Nguyen M."/>
            <person name="Nierman W.C."/>
            <person name="Osborne B.I."/>
            <person name="Pai G."/>
            <person name="Peterson J."/>
            <person name="Pham P.K."/>
            <person name="Rizzo M."/>
            <person name="Rooney T."/>
            <person name="Rowley D."/>
            <person name="Sakano H."/>
            <person name="Salzberg S.L."/>
            <person name="Schwartz J.R."/>
            <person name="Shinn P."/>
            <person name="Southwick A.M."/>
            <person name="Sun H."/>
            <person name="Tallon L.J."/>
            <person name="Tambunga G."/>
            <person name="Toriumi M.J."/>
            <person name="Town C.D."/>
            <person name="Utterback T."/>
            <person name="Van Aken S."/>
            <person name="Vaysberg M."/>
            <person name="Vysotskaia V.S."/>
            <person name="Walker M."/>
            <person name="Wu D."/>
            <person name="Yu G."/>
            <person name="Fraser C.M."/>
            <person name="Venter J.C."/>
            <person name="Davis R.W."/>
        </authorList>
    </citation>
    <scope>NUCLEOTIDE SEQUENCE [LARGE SCALE GENOMIC DNA]</scope>
    <source>
        <strain>cv. Columbia</strain>
    </source>
</reference>
<reference key="2">
    <citation type="journal article" date="2017" name="Plant J.">
        <title>Araport11: a complete reannotation of the Arabidopsis thaliana reference genome.</title>
        <authorList>
            <person name="Cheng C.Y."/>
            <person name="Krishnakumar V."/>
            <person name="Chan A.P."/>
            <person name="Thibaud-Nissen F."/>
            <person name="Schobel S."/>
            <person name="Town C.D."/>
        </authorList>
    </citation>
    <scope>GENOME REANNOTATION</scope>
    <source>
        <strain>cv. Columbia</strain>
    </source>
</reference>
<reference key="3">
    <citation type="journal article" date="1998" name="J. Biol. Chem.">
        <title>The rub family of ubiquitin-like proteins. Crystal structure of Arabidopsis rub1 and expression of multiple rubs in Arabidopsis.</title>
        <authorList>
            <person name="Rao-Naik C."/>
            <person name="delaCruz W."/>
            <person name="Laplaza J.M."/>
            <person name="Tan S."/>
            <person name="Callis J."/>
            <person name="Fisher A.J."/>
        </authorList>
    </citation>
    <scope>TISSUE SPECIFICITY</scope>
</reference>
<dbReference type="EMBL" id="AC002131">
    <property type="protein sequence ID" value="AAC17623.1"/>
    <property type="molecule type" value="Genomic_DNA"/>
</dbReference>
<dbReference type="EMBL" id="CP002684">
    <property type="protein sequence ID" value="AEE28823.1"/>
    <property type="molecule type" value="Genomic_DNA"/>
</dbReference>
<dbReference type="PIR" id="G86254">
    <property type="entry name" value="G86254"/>
</dbReference>
<dbReference type="RefSeq" id="NP_172662.1">
    <property type="nucleotide sequence ID" value="NM_101070.1"/>
</dbReference>
<dbReference type="SMR" id="O65381"/>
<dbReference type="FunCoup" id="O65381">
    <property type="interactions" value="630"/>
</dbReference>
<dbReference type="STRING" id="3702.O65381"/>
<dbReference type="PaxDb" id="3702-AT1G11980.1"/>
<dbReference type="EnsemblPlants" id="AT1G11980.1">
    <property type="protein sequence ID" value="AT1G11980.1"/>
    <property type="gene ID" value="AT1G11980"/>
</dbReference>
<dbReference type="GeneID" id="837750"/>
<dbReference type="Gramene" id="AT1G11980.1">
    <property type="protein sequence ID" value="AT1G11980.1"/>
    <property type="gene ID" value="AT1G11980"/>
</dbReference>
<dbReference type="KEGG" id="ath:AT1G11980"/>
<dbReference type="Araport" id="AT1G11980"/>
<dbReference type="TAIR" id="AT1G11980">
    <property type="gene designation" value="RUB3"/>
</dbReference>
<dbReference type="eggNOG" id="KOG0005">
    <property type="taxonomic scope" value="Eukaryota"/>
</dbReference>
<dbReference type="HOGENOM" id="CLU_010412_6_4_1"/>
<dbReference type="InParanoid" id="O65381"/>
<dbReference type="OMA" id="YAGKQMA"/>
<dbReference type="PhylomeDB" id="O65381"/>
<dbReference type="PRO" id="PR:O65381"/>
<dbReference type="Proteomes" id="UP000006548">
    <property type="component" value="Chromosome 1"/>
</dbReference>
<dbReference type="ExpressionAtlas" id="O65381">
    <property type="expression patterns" value="baseline"/>
</dbReference>
<dbReference type="GO" id="GO:0003729">
    <property type="term" value="F:mRNA binding"/>
    <property type="evidence" value="ECO:0007669"/>
    <property type="project" value="UniProtKB-ARBA"/>
</dbReference>
<dbReference type="CDD" id="cd01806">
    <property type="entry name" value="Ubl_NEDD8"/>
    <property type="match status" value="1"/>
</dbReference>
<dbReference type="FunFam" id="3.10.20.90:FF:000023">
    <property type="entry name" value="NEDD8 protein"/>
    <property type="match status" value="1"/>
</dbReference>
<dbReference type="Gene3D" id="3.10.20.90">
    <property type="entry name" value="Phosphatidylinositol 3-kinase Catalytic Subunit, Chain A, domain 1"/>
    <property type="match status" value="1"/>
</dbReference>
<dbReference type="InterPro" id="IPR038738">
    <property type="entry name" value="Nedd8-like"/>
</dbReference>
<dbReference type="InterPro" id="IPR000626">
    <property type="entry name" value="Ubiquitin-like_dom"/>
</dbReference>
<dbReference type="InterPro" id="IPR029071">
    <property type="entry name" value="Ubiquitin-like_domsf"/>
</dbReference>
<dbReference type="InterPro" id="IPR019954">
    <property type="entry name" value="Ubiquitin_CS"/>
</dbReference>
<dbReference type="InterPro" id="IPR019956">
    <property type="entry name" value="Ubiquitin_dom"/>
</dbReference>
<dbReference type="InterPro" id="IPR050158">
    <property type="entry name" value="Ubiquitin_ubiquitin-like"/>
</dbReference>
<dbReference type="PANTHER" id="PTHR10666">
    <property type="entry name" value="UBIQUITIN"/>
    <property type="match status" value="1"/>
</dbReference>
<dbReference type="Pfam" id="PF00240">
    <property type="entry name" value="ubiquitin"/>
    <property type="match status" value="1"/>
</dbReference>
<dbReference type="PRINTS" id="PR00348">
    <property type="entry name" value="UBIQUITIN"/>
</dbReference>
<dbReference type="SMART" id="SM00213">
    <property type="entry name" value="UBQ"/>
    <property type="match status" value="1"/>
</dbReference>
<dbReference type="SUPFAM" id="SSF54236">
    <property type="entry name" value="Ubiquitin-like"/>
    <property type="match status" value="1"/>
</dbReference>
<dbReference type="PROSITE" id="PS00299">
    <property type="entry name" value="UBIQUITIN_1"/>
    <property type="match status" value="1"/>
</dbReference>
<dbReference type="PROSITE" id="PS50053">
    <property type="entry name" value="UBIQUITIN_2"/>
    <property type="match status" value="1"/>
</dbReference>